<reference key="1">
    <citation type="submission" date="2009-03" db="EMBL/GenBank/DDBJ databases">
        <title>Comparison of the complete genome sequences of Rhodococcus erythropolis PR4 and Rhodococcus opacus B4.</title>
        <authorList>
            <person name="Takarada H."/>
            <person name="Sekine M."/>
            <person name="Hosoyama A."/>
            <person name="Yamada R."/>
            <person name="Fujisawa T."/>
            <person name="Omata S."/>
            <person name="Shimizu A."/>
            <person name="Tsukatani N."/>
            <person name="Tanikawa S."/>
            <person name="Fujita N."/>
            <person name="Harayama S."/>
        </authorList>
    </citation>
    <scope>NUCLEOTIDE SEQUENCE [LARGE SCALE GENOMIC DNA]</scope>
    <source>
        <strain>B4</strain>
    </source>
</reference>
<dbReference type="EC" id="2.7.1.39" evidence="1"/>
<dbReference type="EMBL" id="AP011115">
    <property type="protein sequence ID" value="BAH49443.1"/>
    <property type="molecule type" value="Genomic_DNA"/>
</dbReference>
<dbReference type="RefSeq" id="WP_012688420.1">
    <property type="nucleotide sequence ID" value="NC_012522.1"/>
</dbReference>
<dbReference type="SMR" id="C1AW13"/>
<dbReference type="STRING" id="632772.ROP_11960"/>
<dbReference type="KEGG" id="rop:ROP_11960"/>
<dbReference type="PATRIC" id="fig|632772.20.peg.1267"/>
<dbReference type="HOGENOM" id="CLU_041243_0_1_11"/>
<dbReference type="OrthoDB" id="9769912at2"/>
<dbReference type="UniPathway" id="UPA00050">
    <property type="reaction ID" value="UER00064"/>
</dbReference>
<dbReference type="Proteomes" id="UP000002212">
    <property type="component" value="Chromosome"/>
</dbReference>
<dbReference type="GO" id="GO:0005737">
    <property type="term" value="C:cytoplasm"/>
    <property type="evidence" value="ECO:0007669"/>
    <property type="project" value="UniProtKB-SubCell"/>
</dbReference>
<dbReference type="GO" id="GO:0005524">
    <property type="term" value="F:ATP binding"/>
    <property type="evidence" value="ECO:0007669"/>
    <property type="project" value="UniProtKB-UniRule"/>
</dbReference>
<dbReference type="GO" id="GO:0004413">
    <property type="term" value="F:homoserine kinase activity"/>
    <property type="evidence" value="ECO:0007669"/>
    <property type="project" value="UniProtKB-UniRule"/>
</dbReference>
<dbReference type="GO" id="GO:0009088">
    <property type="term" value="P:threonine biosynthetic process"/>
    <property type="evidence" value="ECO:0007669"/>
    <property type="project" value="UniProtKB-UniRule"/>
</dbReference>
<dbReference type="Gene3D" id="3.30.230.10">
    <property type="match status" value="1"/>
</dbReference>
<dbReference type="Gene3D" id="3.30.70.890">
    <property type="entry name" value="GHMP kinase, C-terminal domain"/>
    <property type="match status" value="1"/>
</dbReference>
<dbReference type="HAMAP" id="MF_00384">
    <property type="entry name" value="Homoser_kinase"/>
    <property type="match status" value="1"/>
</dbReference>
<dbReference type="InterPro" id="IPR013750">
    <property type="entry name" value="GHMP_kinase_C_dom"/>
</dbReference>
<dbReference type="InterPro" id="IPR036554">
    <property type="entry name" value="GHMP_kinase_C_sf"/>
</dbReference>
<dbReference type="InterPro" id="IPR006204">
    <property type="entry name" value="GHMP_kinase_N_dom"/>
</dbReference>
<dbReference type="InterPro" id="IPR006203">
    <property type="entry name" value="GHMP_knse_ATP-bd_CS"/>
</dbReference>
<dbReference type="InterPro" id="IPR000870">
    <property type="entry name" value="Homoserine_kinase"/>
</dbReference>
<dbReference type="InterPro" id="IPR020568">
    <property type="entry name" value="Ribosomal_Su5_D2-typ_SF"/>
</dbReference>
<dbReference type="InterPro" id="IPR014721">
    <property type="entry name" value="Ribsml_uS5_D2-typ_fold_subgr"/>
</dbReference>
<dbReference type="NCBIfam" id="TIGR00191">
    <property type="entry name" value="thrB"/>
    <property type="match status" value="1"/>
</dbReference>
<dbReference type="PANTHER" id="PTHR20861:SF1">
    <property type="entry name" value="HOMOSERINE KINASE"/>
    <property type="match status" value="1"/>
</dbReference>
<dbReference type="PANTHER" id="PTHR20861">
    <property type="entry name" value="HOMOSERINE/4-DIPHOSPHOCYTIDYL-2-C-METHYL-D-ERYTHRITOL KINASE"/>
    <property type="match status" value="1"/>
</dbReference>
<dbReference type="Pfam" id="PF08544">
    <property type="entry name" value="GHMP_kinases_C"/>
    <property type="match status" value="1"/>
</dbReference>
<dbReference type="Pfam" id="PF00288">
    <property type="entry name" value="GHMP_kinases_N"/>
    <property type="match status" value="1"/>
</dbReference>
<dbReference type="PIRSF" id="PIRSF000676">
    <property type="entry name" value="Homoser_kin"/>
    <property type="match status" value="1"/>
</dbReference>
<dbReference type="PRINTS" id="PR00958">
    <property type="entry name" value="HOMSERKINASE"/>
</dbReference>
<dbReference type="SUPFAM" id="SSF55060">
    <property type="entry name" value="GHMP Kinase, C-terminal domain"/>
    <property type="match status" value="1"/>
</dbReference>
<dbReference type="SUPFAM" id="SSF54211">
    <property type="entry name" value="Ribosomal protein S5 domain 2-like"/>
    <property type="match status" value="1"/>
</dbReference>
<dbReference type="PROSITE" id="PS00627">
    <property type="entry name" value="GHMP_KINASES_ATP"/>
    <property type="match status" value="1"/>
</dbReference>
<sequence>MTQTLPAGLTVTARVPASSANLGPGFDTLGIALGLYDEITVTTTASGLNIRVEGEGADDVPWGPSHLVVRAIERGLESAGVWADGLDVVCRNVIPHSRGLGSSASAVVGGLAAANGLAIKLDPELGLSLDQLVQLSSEFEGHPDNASASVLGGAVVSWSCAGEQADGAPAATDIYSAVALKVHPAIRVVALVPGERSSTAHTRGLLPETVPHRDAAFNVSRGALAVVALTERPDLLMAATEDRLHQTQRAPALPLTTRWIAVLRKAGIAATVSGAGPTVLALTTEPFPVELRAQAEAEGLQVLELDVADGVRTS</sequence>
<keyword id="KW-0028">Amino-acid biosynthesis</keyword>
<keyword id="KW-0067">ATP-binding</keyword>
<keyword id="KW-0963">Cytoplasm</keyword>
<keyword id="KW-0418">Kinase</keyword>
<keyword id="KW-0547">Nucleotide-binding</keyword>
<keyword id="KW-0791">Threonine biosynthesis</keyword>
<keyword id="KW-0808">Transferase</keyword>
<organism>
    <name type="scientific">Rhodococcus opacus (strain B4)</name>
    <dbReference type="NCBI Taxonomy" id="632772"/>
    <lineage>
        <taxon>Bacteria</taxon>
        <taxon>Bacillati</taxon>
        <taxon>Actinomycetota</taxon>
        <taxon>Actinomycetes</taxon>
        <taxon>Mycobacteriales</taxon>
        <taxon>Nocardiaceae</taxon>
        <taxon>Rhodococcus</taxon>
    </lineage>
</organism>
<gene>
    <name evidence="1" type="primary">thrB</name>
    <name type="ordered locus">ROP_11960</name>
</gene>
<proteinExistence type="inferred from homology"/>
<evidence type="ECO:0000255" key="1">
    <source>
        <dbReference type="HAMAP-Rule" id="MF_00384"/>
    </source>
</evidence>
<accession>C1AW13</accession>
<protein>
    <recommendedName>
        <fullName evidence="1">Homoserine kinase</fullName>
        <shortName evidence="1">HK</shortName>
        <shortName evidence="1">HSK</shortName>
        <ecNumber evidence="1">2.7.1.39</ecNumber>
    </recommendedName>
</protein>
<feature type="chain" id="PRO_1000134258" description="Homoserine kinase">
    <location>
        <begin position="1"/>
        <end position="314"/>
    </location>
</feature>
<feature type="binding site" evidence="1">
    <location>
        <begin position="95"/>
        <end position="105"/>
    </location>
    <ligand>
        <name>ATP</name>
        <dbReference type="ChEBI" id="CHEBI:30616"/>
    </ligand>
</feature>
<comment type="function">
    <text evidence="1">Catalyzes the ATP-dependent phosphorylation of L-homoserine to L-homoserine phosphate.</text>
</comment>
<comment type="catalytic activity">
    <reaction evidence="1">
        <text>L-homoserine + ATP = O-phospho-L-homoserine + ADP + H(+)</text>
        <dbReference type="Rhea" id="RHEA:13985"/>
        <dbReference type="ChEBI" id="CHEBI:15378"/>
        <dbReference type="ChEBI" id="CHEBI:30616"/>
        <dbReference type="ChEBI" id="CHEBI:57476"/>
        <dbReference type="ChEBI" id="CHEBI:57590"/>
        <dbReference type="ChEBI" id="CHEBI:456216"/>
        <dbReference type="EC" id="2.7.1.39"/>
    </reaction>
</comment>
<comment type="pathway">
    <text evidence="1">Amino-acid biosynthesis; L-threonine biosynthesis; L-threonine from L-aspartate: step 4/5.</text>
</comment>
<comment type="subcellular location">
    <subcellularLocation>
        <location evidence="1">Cytoplasm</location>
    </subcellularLocation>
</comment>
<comment type="similarity">
    <text evidence="1">Belongs to the GHMP kinase family. Homoserine kinase subfamily.</text>
</comment>
<name>KHSE_RHOOB</name>